<protein>
    <recommendedName>
        <fullName evidence="1">Small ribosomal subunit protein uS9</fullName>
    </recommendedName>
    <alternativeName>
        <fullName evidence="3">30S ribosomal protein S9</fullName>
    </alternativeName>
</protein>
<keyword id="KW-1185">Reference proteome</keyword>
<keyword id="KW-0687">Ribonucleoprotein</keyword>
<keyword id="KW-0689">Ribosomal protein</keyword>
<feature type="chain" id="PRO_0000111421" description="Small ribosomal subunit protein uS9">
    <location>
        <begin position="1"/>
        <end position="130"/>
    </location>
</feature>
<feature type="region of interest" description="Disordered" evidence="2">
    <location>
        <begin position="106"/>
        <end position="130"/>
    </location>
</feature>
<feature type="compositionally biased region" description="Basic residues" evidence="2">
    <location>
        <begin position="111"/>
        <end position="130"/>
    </location>
</feature>
<proteinExistence type="inferred from homology"/>
<evidence type="ECO:0000255" key="1">
    <source>
        <dbReference type="HAMAP-Rule" id="MF_00532"/>
    </source>
</evidence>
<evidence type="ECO:0000256" key="2">
    <source>
        <dbReference type="SAM" id="MobiDB-lite"/>
    </source>
</evidence>
<evidence type="ECO:0000305" key="3"/>
<organism>
    <name type="scientific">Streptococcus pneumoniae (strain ATCC BAA-255 / R6)</name>
    <dbReference type="NCBI Taxonomy" id="171101"/>
    <lineage>
        <taxon>Bacteria</taxon>
        <taxon>Bacillati</taxon>
        <taxon>Bacillota</taxon>
        <taxon>Bacilli</taxon>
        <taxon>Lactobacillales</taxon>
        <taxon>Streptococcaceae</taxon>
        <taxon>Streptococcus</taxon>
    </lineage>
</organism>
<dbReference type="EMBL" id="AE007317">
    <property type="protein sequence ID" value="AAK99076.1"/>
    <property type="molecule type" value="Genomic_DNA"/>
</dbReference>
<dbReference type="PIR" id="H97905">
    <property type="entry name" value="H97905"/>
</dbReference>
<dbReference type="RefSeq" id="NP_357866.1">
    <property type="nucleotide sequence ID" value="NC_003098.1"/>
</dbReference>
<dbReference type="RefSeq" id="WP_000075973.1">
    <property type="nucleotide sequence ID" value="NC_003098.1"/>
</dbReference>
<dbReference type="SMR" id="Q8CWU4"/>
<dbReference type="STRING" id="171101.spr0272"/>
<dbReference type="GeneID" id="93922492"/>
<dbReference type="KEGG" id="spr:spr0272"/>
<dbReference type="PATRIC" id="fig|171101.6.peg.309"/>
<dbReference type="eggNOG" id="COG0103">
    <property type="taxonomic scope" value="Bacteria"/>
</dbReference>
<dbReference type="HOGENOM" id="CLU_046483_2_1_9"/>
<dbReference type="PRO" id="PR:Q8CWU4"/>
<dbReference type="Proteomes" id="UP000000586">
    <property type="component" value="Chromosome"/>
</dbReference>
<dbReference type="GO" id="GO:0022627">
    <property type="term" value="C:cytosolic small ribosomal subunit"/>
    <property type="evidence" value="ECO:0000318"/>
    <property type="project" value="GO_Central"/>
</dbReference>
<dbReference type="GO" id="GO:0003723">
    <property type="term" value="F:RNA binding"/>
    <property type="evidence" value="ECO:0000318"/>
    <property type="project" value="GO_Central"/>
</dbReference>
<dbReference type="GO" id="GO:0003735">
    <property type="term" value="F:structural constituent of ribosome"/>
    <property type="evidence" value="ECO:0000318"/>
    <property type="project" value="GO_Central"/>
</dbReference>
<dbReference type="GO" id="GO:0006412">
    <property type="term" value="P:translation"/>
    <property type="evidence" value="ECO:0007669"/>
    <property type="project" value="UniProtKB-UniRule"/>
</dbReference>
<dbReference type="FunFam" id="3.30.230.10:FF:000001">
    <property type="entry name" value="30S ribosomal protein S9"/>
    <property type="match status" value="1"/>
</dbReference>
<dbReference type="Gene3D" id="3.30.230.10">
    <property type="match status" value="1"/>
</dbReference>
<dbReference type="HAMAP" id="MF_00532_B">
    <property type="entry name" value="Ribosomal_uS9_B"/>
    <property type="match status" value="1"/>
</dbReference>
<dbReference type="InterPro" id="IPR020568">
    <property type="entry name" value="Ribosomal_Su5_D2-typ_SF"/>
</dbReference>
<dbReference type="InterPro" id="IPR000754">
    <property type="entry name" value="Ribosomal_uS9"/>
</dbReference>
<dbReference type="InterPro" id="IPR023035">
    <property type="entry name" value="Ribosomal_uS9_bac/plastid"/>
</dbReference>
<dbReference type="InterPro" id="IPR020574">
    <property type="entry name" value="Ribosomal_uS9_CS"/>
</dbReference>
<dbReference type="InterPro" id="IPR014721">
    <property type="entry name" value="Ribsml_uS5_D2-typ_fold_subgr"/>
</dbReference>
<dbReference type="NCBIfam" id="NF001099">
    <property type="entry name" value="PRK00132.1"/>
    <property type="match status" value="1"/>
</dbReference>
<dbReference type="PANTHER" id="PTHR21569">
    <property type="entry name" value="RIBOSOMAL PROTEIN S9"/>
    <property type="match status" value="1"/>
</dbReference>
<dbReference type="PANTHER" id="PTHR21569:SF1">
    <property type="entry name" value="SMALL RIBOSOMAL SUBUNIT PROTEIN US9M"/>
    <property type="match status" value="1"/>
</dbReference>
<dbReference type="Pfam" id="PF00380">
    <property type="entry name" value="Ribosomal_S9"/>
    <property type="match status" value="1"/>
</dbReference>
<dbReference type="SUPFAM" id="SSF54211">
    <property type="entry name" value="Ribosomal protein S5 domain 2-like"/>
    <property type="match status" value="1"/>
</dbReference>
<dbReference type="PROSITE" id="PS00360">
    <property type="entry name" value="RIBOSOMAL_S9"/>
    <property type="match status" value="1"/>
</dbReference>
<gene>
    <name evidence="1" type="primary">rpsI</name>
    <name type="ordered locus">spr0272</name>
</gene>
<name>RS9_STRR6</name>
<sequence length="130" mass="14234">MSQAQYAGTGRRKNAVARVRLVPGTGKITVNKKDVEEYIPHADLRLVINQPFAVTSTVGSYDVFVNVVGGGYAGQSGAIRHGIARALLQVDPDFRDSLKRAGLLTRDSRKVERKKPGLKKARKASQFSKR</sequence>
<comment type="similarity">
    <text evidence="1">Belongs to the universal ribosomal protein uS9 family.</text>
</comment>
<accession>Q8CWU4</accession>
<reference key="1">
    <citation type="journal article" date="2001" name="J. Bacteriol.">
        <title>Genome of the bacterium Streptococcus pneumoniae strain R6.</title>
        <authorList>
            <person name="Hoskins J."/>
            <person name="Alborn W.E. Jr."/>
            <person name="Arnold J."/>
            <person name="Blaszczak L.C."/>
            <person name="Burgett S."/>
            <person name="DeHoff B.S."/>
            <person name="Estrem S.T."/>
            <person name="Fritz L."/>
            <person name="Fu D.-J."/>
            <person name="Fuller W."/>
            <person name="Geringer C."/>
            <person name="Gilmour R."/>
            <person name="Glass J.S."/>
            <person name="Khoja H."/>
            <person name="Kraft A.R."/>
            <person name="Lagace R.E."/>
            <person name="LeBlanc D.J."/>
            <person name="Lee L.N."/>
            <person name="Lefkowitz E.J."/>
            <person name="Lu J."/>
            <person name="Matsushima P."/>
            <person name="McAhren S.M."/>
            <person name="McHenney M."/>
            <person name="McLeaster K."/>
            <person name="Mundy C.W."/>
            <person name="Nicas T.I."/>
            <person name="Norris F.H."/>
            <person name="O'Gara M."/>
            <person name="Peery R.B."/>
            <person name="Robertson G.T."/>
            <person name="Rockey P."/>
            <person name="Sun P.-M."/>
            <person name="Winkler M.E."/>
            <person name="Yang Y."/>
            <person name="Young-Bellido M."/>
            <person name="Zhao G."/>
            <person name="Zook C.A."/>
            <person name="Baltz R.H."/>
            <person name="Jaskunas S.R."/>
            <person name="Rosteck P.R. Jr."/>
            <person name="Skatrud P.L."/>
            <person name="Glass J.I."/>
        </authorList>
    </citation>
    <scope>NUCLEOTIDE SEQUENCE [LARGE SCALE GENOMIC DNA]</scope>
    <source>
        <strain>ATCC BAA-255 / R6</strain>
    </source>
</reference>